<reference key="1">
    <citation type="journal article" date="2000" name="Nature">
        <title>Sequence and analysis of chromosome 5 of the plant Arabidopsis thaliana.</title>
        <authorList>
            <person name="Tabata S."/>
            <person name="Kaneko T."/>
            <person name="Nakamura Y."/>
            <person name="Kotani H."/>
            <person name="Kato T."/>
            <person name="Asamizu E."/>
            <person name="Miyajima N."/>
            <person name="Sasamoto S."/>
            <person name="Kimura T."/>
            <person name="Hosouchi T."/>
            <person name="Kawashima K."/>
            <person name="Kohara M."/>
            <person name="Matsumoto M."/>
            <person name="Matsuno A."/>
            <person name="Muraki A."/>
            <person name="Nakayama S."/>
            <person name="Nakazaki N."/>
            <person name="Naruo K."/>
            <person name="Okumura S."/>
            <person name="Shinpo S."/>
            <person name="Takeuchi C."/>
            <person name="Wada T."/>
            <person name="Watanabe A."/>
            <person name="Yamada M."/>
            <person name="Yasuda M."/>
            <person name="Sato S."/>
            <person name="de la Bastide M."/>
            <person name="Huang E."/>
            <person name="Spiegel L."/>
            <person name="Gnoj L."/>
            <person name="O'Shaughnessy A."/>
            <person name="Preston R."/>
            <person name="Habermann K."/>
            <person name="Murray J."/>
            <person name="Johnson D."/>
            <person name="Rohlfing T."/>
            <person name="Nelson J."/>
            <person name="Stoneking T."/>
            <person name="Pepin K."/>
            <person name="Spieth J."/>
            <person name="Sekhon M."/>
            <person name="Armstrong J."/>
            <person name="Becker M."/>
            <person name="Belter E."/>
            <person name="Cordum H."/>
            <person name="Cordes M."/>
            <person name="Courtney L."/>
            <person name="Courtney W."/>
            <person name="Dante M."/>
            <person name="Du H."/>
            <person name="Edwards J."/>
            <person name="Fryman J."/>
            <person name="Haakensen B."/>
            <person name="Lamar E."/>
            <person name="Latreille P."/>
            <person name="Leonard S."/>
            <person name="Meyer R."/>
            <person name="Mulvaney E."/>
            <person name="Ozersky P."/>
            <person name="Riley A."/>
            <person name="Strowmatt C."/>
            <person name="Wagner-McPherson C."/>
            <person name="Wollam A."/>
            <person name="Yoakum M."/>
            <person name="Bell M."/>
            <person name="Dedhia N."/>
            <person name="Parnell L."/>
            <person name="Shah R."/>
            <person name="Rodriguez M."/>
            <person name="Hoon See L."/>
            <person name="Vil D."/>
            <person name="Baker J."/>
            <person name="Kirchoff K."/>
            <person name="Toth K."/>
            <person name="King L."/>
            <person name="Bahret A."/>
            <person name="Miller B."/>
            <person name="Marra M.A."/>
            <person name="Martienssen R."/>
            <person name="McCombie W.R."/>
            <person name="Wilson R.K."/>
            <person name="Murphy G."/>
            <person name="Bancroft I."/>
            <person name="Volckaert G."/>
            <person name="Wambutt R."/>
            <person name="Duesterhoeft A."/>
            <person name="Stiekema W."/>
            <person name="Pohl T."/>
            <person name="Entian K.-D."/>
            <person name="Terryn N."/>
            <person name="Hartley N."/>
            <person name="Bent E."/>
            <person name="Johnson S."/>
            <person name="Langham S.-A."/>
            <person name="McCullagh B."/>
            <person name="Robben J."/>
            <person name="Grymonprez B."/>
            <person name="Zimmermann W."/>
            <person name="Ramsperger U."/>
            <person name="Wedler H."/>
            <person name="Balke K."/>
            <person name="Wedler E."/>
            <person name="Peters S."/>
            <person name="van Staveren M."/>
            <person name="Dirkse W."/>
            <person name="Mooijman P."/>
            <person name="Klein Lankhorst R."/>
            <person name="Weitzenegger T."/>
            <person name="Bothe G."/>
            <person name="Rose M."/>
            <person name="Hauf J."/>
            <person name="Berneiser S."/>
            <person name="Hempel S."/>
            <person name="Feldpausch M."/>
            <person name="Lamberth S."/>
            <person name="Villarroel R."/>
            <person name="Gielen J."/>
            <person name="Ardiles W."/>
            <person name="Bents O."/>
            <person name="Lemcke K."/>
            <person name="Kolesov G."/>
            <person name="Mayer K.F.X."/>
            <person name="Rudd S."/>
            <person name="Schoof H."/>
            <person name="Schueller C."/>
            <person name="Zaccaria P."/>
            <person name="Mewes H.-W."/>
            <person name="Bevan M."/>
            <person name="Fransz P.F."/>
        </authorList>
    </citation>
    <scope>NUCLEOTIDE SEQUENCE [LARGE SCALE GENOMIC DNA]</scope>
    <source>
        <strain>cv. Columbia</strain>
    </source>
</reference>
<reference key="2">
    <citation type="journal article" date="2017" name="Plant J.">
        <title>Araport11: a complete reannotation of the Arabidopsis thaliana reference genome.</title>
        <authorList>
            <person name="Cheng C.Y."/>
            <person name="Krishnakumar V."/>
            <person name="Chan A.P."/>
            <person name="Thibaud-Nissen F."/>
            <person name="Schobel S."/>
            <person name="Town C.D."/>
        </authorList>
    </citation>
    <scope>GENOME REANNOTATION</scope>
    <source>
        <strain>cv. Columbia</strain>
    </source>
</reference>
<reference key="3">
    <citation type="submission" date="2003-10" db="EMBL/GenBank/DDBJ databases">
        <title>Arabidopsis ORF clones.</title>
        <authorList>
            <person name="Shinn P."/>
            <person name="Chen H."/>
            <person name="Cheuk R.F."/>
            <person name="Kim C.J."/>
            <person name="Carninci P."/>
            <person name="Hayashizaki Y."/>
            <person name="Ishida J."/>
            <person name="Kamiya A."/>
            <person name="Kawai J."/>
            <person name="Narusaka M."/>
            <person name="Sakurai T."/>
            <person name="Satou M."/>
            <person name="Seki M."/>
            <person name="Shinozaki K."/>
            <person name="Ecker J.R."/>
        </authorList>
    </citation>
    <scope>NUCLEOTIDE SEQUENCE [LARGE SCALE MRNA]</scope>
    <source>
        <strain>cv. Columbia</strain>
    </source>
</reference>
<reference key="4">
    <citation type="submission" date="2004-09" db="EMBL/GenBank/DDBJ databases">
        <title>Large-scale analysis of RIKEN Arabidopsis full-length (RAFL) cDNAs.</title>
        <authorList>
            <person name="Totoki Y."/>
            <person name="Seki M."/>
            <person name="Ishida J."/>
            <person name="Nakajima M."/>
            <person name="Enju A."/>
            <person name="Kamiya A."/>
            <person name="Narusaka M."/>
            <person name="Shin-i T."/>
            <person name="Nakagawa M."/>
            <person name="Sakamoto N."/>
            <person name="Oishi K."/>
            <person name="Kohara Y."/>
            <person name="Kobayashi M."/>
            <person name="Toyoda A."/>
            <person name="Sakaki Y."/>
            <person name="Sakurai T."/>
            <person name="Iida K."/>
            <person name="Akiyama K."/>
            <person name="Satou M."/>
            <person name="Toyoda T."/>
            <person name="Konagaya A."/>
            <person name="Carninci P."/>
            <person name="Kawai J."/>
            <person name="Hayashizaki Y."/>
            <person name="Shinozaki K."/>
        </authorList>
    </citation>
    <scope>NUCLEOTIDE SEQUENCE [LARGE SCALE MRNA]</scope>
    <source>
        <strain>cv. Columbia</strain>
    </source>
</reference>
<name>CRS2B_ARATH</name>
<evidence type="ECO:0000250" key="1"/>
<evidence type="ECO:0000255" key="2"/>
<evidence type="ECO:0000305" key="3"/>
<accession>Q9LF14</accession>
<proteinExistence type="evidence at transcript level"/>
<keyword id="KW-0150">Chloroplast</keyword>
<keyword id="KW-0507">mRNA processing</keyword>
<keyword id="KW-0508">mRNA splicing</keyword>
<keyword id="KW-0934">Plastid</keyword>
<keyword id="KW-1185">Reference proteome</keyword>
<keyword id="KW-0687">Ribonucleoprotein</keyword>
<keyword id="KW-0809">Transit peptide</keyword>
<comment type="function">
    <text evidence="1">Required for the splicing of group IIB introns in chloroplasts.</text>
</comment>
<comment type="subunit">
    <text evidence="1">Part of large ribonucleo-protein complexes that include group IIB introns and either CAF1 or CAF2.</text>
</comment>
<comment type="subcellular location">
    <subcellularLocation>
        <location evidence="1">Plastid</location>
        <location evidence="1">Chloroplast stroma</location>
    </subcellularLocation>
</comment>
<comment type="similarity">
    <text evidence="3">Belongs to the PTH family. CRS2 subfamily.</text>
</comment>
<dbReference type="EMBL" id="AL391148">
    <property type="protein sequence ID" value="CAC01855.1"/>
    <property type="molecule type" value="Genomic_DNA"/>
</dbReference>
<dbReference type="EMBL" id="CP002688">
    <property type="protein sequence ID" value="AED92251.1"/>
    <property type="molecule type" value="Genomic_DNA"/>
</dbReference>
<dbReference type="EMBL" id="CP002688">
    <property type="protein sequence ID" value="AED92252.1"/>
    <property type="molecule type" value="Genomic_DNA"/>
</dbReference>
<dbReference type="EMBL" id="BT010650">
    <property type="protein sequence ID" value="AAR07514.1"/>
    <property type="molecule type" value="mRNA"/>
</dbReference>
<dbReference type="EMBL" id="AK175292">
    <property type="protein sequence ID" value="BAD43055.1"/>
    <property type="molecule type" value="mRNA"/>
</dbReference>
<dbReference type="PIR" id="T51484">
    <property type="entry name" value="T51484"/>
</dbReference>
<dbReference type="RefSeq" id="NP_001078593.1">
    <property type="nucleotide sequence ID" value="NM_001085124.3"/>
</dbReference>
<dbReference type="RefSeq" id="NP_197118.1">
    <property type="nucleotide sequence ID" value="NM_121619.4"/>
</dbReference>
<dbReference type="SMR" id="Q9LF14"/>
<dbReference type="FunCoup" id="Q9LF14">
    <property type="interactions" value="948"/>
</dbReference>
<dbReference type="STRING" id="3702.Q9LF14"/>
<dbReference type="iPTMnet" id="Q9LF14"/>
<dbReference type="PaxDb" id="3702-AT5G16140.2"/>
<dbReference type="ProteomicsDB" id="224411"/>
<dbReference type="EnsemblPlants" id="AT5G16140.1">
    <property type="protein sequence ID" value="AT5G16140.1"/>
    <property type="gene ID" value="AT5G16140"/>
</dbReference>
<dbReference type="EnsemblPlants" id="AT5G16140.2">
    <property type="protein sequence ID" value="AT5G16140.2"/>
    <property type="gene ID" value="AT5G16140"/>
</dbReference>
<dbReference type="GeneID" id="831471"/>
<dbReference type="Gramene" id="AT5G16140.1">
    <property type="protein sequence ID" value="AT5G16140.1"/>
    <property type="gene ID" value="AT5G16140"/>
</dbReference>
<dbReference type="Gramene" id="AT5G16140.2">
    <property type="protein sequence ID" value="AT5G16140.2"/>
    <property type="gene ID" value="AT5G16140"/>
</dbReference>
<dbReference type="KEGG" id="ath:AT5G16140"/>
<dbReference type="Araport" id="AT5G16140"/>
<dbReference type="TAIR" id="AT5G16140"/>
<dbReference type="eggNOG" id="KOG2255">
    <property type="taxonomic scope" value="Eukaryota"/>
</dbReference>
<dbReference type="HOGENOM" id="CLU_062456_5_0_1"/>
<dbReference type="InParanoid" id="Q9LF14"/>
<dbReference type="OMA" id="PNTYMNL"/>
<dbReference type="PhylomeDB" id="Q9LF14"/>
<dbReference type="PRO" id="PR:Q9LF14"/>
<dbReference type="Proteomes" id="UP000006548">
    <property type="component" value="Chromosome 5"/>
</dbReference>
<dbReference type="ExpressionAtlas" id="Q9LF14">
    <property type="expression patterns" value="baseline and differential"/>
</dbReference>
<dbReference type="GO" id="GO:0009570">
    <property type="term" value="C:chloroplast stroma"/>
    <property type="evidence" value="ECO:0007669"/>
    <property type="project" value="UniProtKB-SubCell"/>
</dbReference>
<dbReference type="GO" id="GO:1990904">
    <property type="term" value="C:ribonucleoprotein complex"/>
    <property type="evidence" value="ECO:0007669"/>
    <property type="project" value="UniProtKB-KW"/>
</dbReference>
<dbReference type="GO" id="GO:0004045">
    <property type="term" value="F:peptidyl-tRNA hydrolase activity"/>
    <property type="evidence" value="ECO:0007669"/>
    <property type="project" value="InterPro"/>
</dbReference>
<dbReference type="GO" id="GO:0006397">
    <property type="term" value="P:mRNA processing"/>
    <property type="evidence" value="ECO:0007669"/>
    <property type="project" value="UniProtKB-KW"/>
</dbReference>
<dbReference type="GO" id="GO:0008380">
    <property type="term" value="P:RNA splicing"/>
    <property type="evidence" value="ECO:0007669"/>
    <property type="project" value="UniProtKB-KW"/>
</dbReference>
<dbReference type="CDD" id="cd02406">
    <property type="entry name" value="CRS2"/>
    <property type="match status" value="1"/>
</dbReference>
<dbReference type="FunFam" id="3.40.50.1470:FF:000001">
    <property type="entry name" value="Peptidyl-tRNA hydrolase"/>
    <property type="match status" value="1"/>
</dbReference>
<dbReference type="Gene3D" id="3.40.50.1470">
    <property type="entry name" value="Peptidyl-tRNA hydrolase"/>
    <property type="match status" value="1"/>
</dbReference>
<dbReference type="HAMAP" id="MF_00083">
    <property type="entry name" value="Pept_tRNA_hydro_bact"/>
    <property type="match status" value="1"/>
</dbReference>
<dbReference type="InterPro" id="IPR048076">
    <property type="entry name" value="CRS2-like"/>
</dbReference>
<dbReference type="InterPro" id="IPR001328">
    <property type="entry name" value="Pept_tRNA_hydro"/>
</dbReference>
<dbReference type="InterPro" id="IPR018171">
    <property type="entry name" value="Pept_tRNA_hydro_CS"/>
</dbReference>
<dbReference type="InterPro" id="IPR036416">
    <property type="entry name" value="Pept_tRNA_hydro_sf"/>
</dbReference>
<dbReference type="NCBIfam" id="TIGR00447">
    <property type="entry name" value="pth"/>
    <property type="match status" value="1"/>
</dbReference>
<dbReference type="PANTHER" id="PTHR17224:SF3">
    <property type="entry name" value="CHLOROPLASTIC GROUP IIB INTRON SPLICING FACILITATOR CRS2-B, CHLOROPLASTIC"/>
    <property type="match status" value="1"/>
</dbReference>
<dbReference type="PANTHER" id="PTHR17224">
    <property type="entry name" value="PEPTIDYL-TRNA HYDROLASE"/>
    <property type="match status" value="1"/>
</dbReference>
<dbReference type="Pfam" id="PF01195">
    <property type="entry name" value="Pept_tRNA_hydro"/>
    <property type="match status" value="1"/>
</dbReference>
<dbReference type="SUPFAM" id="SSF53178">
    <property type="entry name" value="Peptidyl-tRNA hydrolase-like"/>
    <property type="match status" value="1"/>
</dbReference>
<dbReference type="PROSITE" id="PS01195">
    <property type="entry name" value="PEPT_TRNA_HYDROL_1"/>
    <property type="match status" value="1"/>
</dbReference>
<dbReference type="PROSITE" id="PS01196">
    <property type="entry name" value="PEPT_TRNA_HYDROL_2"/>
    <property type="match status" value="1"/>
</dbReference>
<feature type="transit peptide" description="Chloroplast" evidence="2">
    <location>
        <begin position="1"/>
        <end status="unknown"/>
    </location>
</feature>
<feature type="chain" id="PRO_0000280531" description="Chloroplastic group IIB intron splicing facilitator CRS2-B, chloroplastic">
    <location>
        <begin status="unknown"/>
        <end position="240"/>
    </location>
</feature>
<gene>
    <name type="primary">CRS2B</name>
    <name type="ordered locus">At5g16140</name>
    <name type="ORF">T21H19.60</name>
</gene>
<sequence length="240" mass="26935">MLCPTYTPSVYHFQTQKPVFRKQRFRVCSSTSGGEDDRFKVEYTPWLIVGLGNPGNKYHGTRHNVGFEMIDVLARKEGVLMNTIQSKALIGIGAIEDVPILLAKPQTYMNFSGESVGSLASHYRVPLRHILMIYDEMALPNGVLRLQPKGGQGYHNGVKSVMGHLDGRRNFPRLSIGIGKPPGNMDMKAFLLQKFSPLEQKQIEEALEQGSEAVKTLVLNGFNQGISRFNLVQKYKFHKV</sequence>
<protein>
    <recommendedName>
        <fullName>Chloroplastic group IIB intron splicing facilitator CRS2-B, chloroplastic</fullName>
    </recommendedName>
    <alternativeName>
        <fullName>CRS2-like protein B</fullName>
    </alternativeName>
    <alternativeName>
        <fullName>Chloroplastic RNA splicing factor 2-B</fullName>
    </alternativeName>
</protein>
<organism>
    <name type="scientific">Arabidopsis thaliana</name>
    <name type="common">Mouse-ear cress</name>
    <dbReference type="NCBI Taxonomy" id="3702"/>
    <lineage>
        <taxon>Eukaryota</taxon>
        <taxon>Viridiplantae</taxon>
        <taxon>Streptophyta</taxon>
        <taxon>Embryophyta</taxon>
        <taxon>Tracheophyta</taxon>
        <taxon>Spermatophyta</taxon>
        <taxon>Magnoliopsida</taxon>
        <taxon>eudicotyledons</taxon>
        <taxon>Gunneridae</taxon>
        <taxon>Pentapetalae</taxon>
        <taxon>rosids</taxon>
        <taxon>malvids</taxon>
        <taxon>Brassicales</taxon>
        <taxon>Brassicaceae</taxon>
        <taxon>Camelineae</taxon>
        <taxon>Arabidopsis</taxon>
    </lineage>
</organism>